<proteinExistence type="evidence at protein level"/>
<name>HXB3_HUMAN</name>
<keyword id="KW-0025">Alternative splicing</keyword>
<keyword id="KW-0217">Developmental protein</keyword>
<keyword id="KW-0238">DNA-binding</keyword>
<keyword id="KW-0371">Homeobox</keyword>
<keyword id="KW-0539">Nucleus</keyword>
<keyword id="KW-1267">Proteomics identification</keyword>
<keyword id="KW-1185">Reference proteome</keyword>
<keyword id="KW-0804">Transcription</keyword>
<keyword id="KW-0805">Transcription regulation</keyword>
<dbReference type="EMBL" id="X16667">
    <property type="protein sequence ID" value="CAA34657.1"/>
    <property type="molecule type" value="mRNA"/>
</dbReference>
<dbReference type="EMBL" id="U59298">
    <property type="protein sequence ID" value="AAD10852.1"/>
    <property type="molecule type" value="mRNA"/>
</dbReference>
<dbReference type="EMBL" id="AF287967">
    <property type="protein sequence ID" value="AAG31555.1"/>
    <property type="molecule type" value="Genomic_DNA"/>
</dbReference>
<dbReference type="EMBL" id="AK291182">
    <property type="protein sequence ID" value="BAF83871.1"/>
    <property type="molecule type" value="mRNA"/>
</dbReference>
<dbReference type="EMBL" id="AK299226">
    <property type="protein sequence ID" value="BAH12974.1"/>
    <property type="molecule type" value="mRNA"/>
</dbReference>
<dbReference type="EMBL" id="AK299265">
    <property type="protein sequence ID" value="BAH12984.1"/>
    <property type="molecule type" value="mRNA"/>
</dbReference>
<dbReference type="EMBL" id="AK315102">
    <property type="protein sequence ID" value="BAG37563.1"/>
    <property type="molecule type" value="mRNA"/>
</dbReference>
<dbReference type="EMBL" id="AK316245">
    <property type="protein sequence ID" value="BAH14616.1"/>
    <property type="molecule type" value="mRNA"/>
</dbReference>
<dbReference type="EMBL" id="AC103702">
    <property type="status" value="NOT_ANNOTATED_CDS"/>
    <property type="molecule type" value="Genomic_DNA"/>
</dbReference>
<dbReference type="EMBL" id="CH471109">
    <property type="protein sequence ID" value="EAW94739.1"/>
    <property type="molecule type" value="Genomic_DNA"/>
</dbReference>
<dbReference type="EMBL" id="CH471109">
    <property type="protein sequence ID" value="EAW94740.1"/>
    <property type="molecule type" value="Genomic_DNA"/>
</dbReference>
<dbReference type="EMBL" id="CH471109">
    <property type="protein sequence ID" value="EAW94741.1"/>
    <property type="molecule type" value="Genomic_DNA"/>
</dbReference>
<dbReference type="EMBL" id="X16175">
    <property type="protein sequence ID" value="CAA34297.1"/>
    <property type="molecule type" value="Genomic_DNA"/>
</dbReference>
<dbReference type="CCDS" id="CCDS11528.1">
    <molecule id="P14651-1"/>
</dbReference>
<dbReference type="CCDS" id="CCDS82153.1">
    <molecule id="P14651-3"/>
</dbReference>
<dbReference type="CCDS" id="CCDS82154.1">
    <molecule id="P14651-2"/>
</dbReference>
<dbReference type="PIR" id="S07543">
    <property type="entry name" value="WJHU2G"/>
</dbReference>
<dbReference type="RefSeq" id="NP_001317251.1">
    <molecule id="P14651-2"/>
    <property type="nucleotide sequence ID" value="NM_001330322.2"/>
</dbReference>
<dbReference type="RefSeq" id="NP_001317252.1">
    <molecule id="P14651-3"/>
    <property type="nucleotide sequence ID" value="NM_001330323.1"/>
</dbReference>
<dbReference type="RefSeq" id="NP_001371676.1">
    <molecule id="P14651-1"/>
    <property type="nucleotide sequence ID" value="NM_001384747.1"/>
</dbReference>
<dbReference type="RefSeq" id="NP_001371678.1">
    <molecule id="P14651-1"/>
    <property type="nucleotide sequence ID" value="NM_001384749.1"/>
</dbReference>
<dbReference type="RefSeq" id="NP_001371679.1">
    <molecule id="P14651-2"/>
    <property type="nucleotide sequence ID" value="NM_001384750.1"/>
</dbReference>
<dbReference type="RefSeq" id="NP_002137.4">
    <molecule id="P14651-1"/>
    <property type="nucleotide sequence ID" value="NM_002146.4"/>
</dbReference>
<dbReference type="RefSeq" id="XP_005257334.1">
    <property type="nucleotide sequence ID" value="XM_005257277.3"/>
</dbReference>
<dbReference type="RefSeq" id="XP_006721917.1">
    <property type="nucleotide sequence ID" value="XM_006721854.2"/>
</dbReference>
<dbReference type="RefSeq" id="XP_011523010.2">
    <molecule id="P14651-3"/>
    <property type="nucleotide sequence ID" value="XM_011524708.4"/>
</dbReference>
<dbReference type="RefSeq" id="XP_011523012.1">
    <property type="nucleotide sequence ID" value="XM_011524710.1"/>
</dbReference>
<dbReference type="RefSeq" id="XP_011523021.1">
    <property type="nucleotide sequence ID" value="XM_011524719.1"/>
</dbReference>
<dbReference type="RefSeq" id="XP_011523022.1">
    <property type="nucleotide sequence ID" value="XM_011524720.2"/>
</dbReference>
<dbReference type="RefSeq" id="XP_011523028.1">
    <molecule id="P14651-2"/>
    <property type="nucleotide sequence ID" value="XM_011524726.3"/>
</dbReference>
<dbReference type="RefSeq" id="XP_024306505.1">
    <molecule id="P14651-1"/>
    <property type="nucleotide sequence ID" value="XM_024450737.2"/>
</dbReference>
<dbReference type="RefSeq" id="XP_047291858.1">
    <molecule id="P14651-1"/>
    <property type="nucleotide sequence ID" value="XM_047435902.1"/>
</dbReference>
<dbReference type="RefSeq" id="XP_047291859.1">
    <molecule id="P14651-1"/>
    <property type="nucleotide sequence ID" value="XM_047435903.1"/>
</dbReference>
<dbReference type="RefSeq" id="XP_047291862.1">
    <molecule id="P14651-3"/>
    <property type="nucleotide sequence ID" value="XM_047435906.1"/>
</dbReference>
<dbReference type="RefSeq" id="XP_047291863.1">
    <molecule id="P14651-2"/>
    <property type="nucleotide sequence ID" value="XM_047435907.1"/>
</dbReference>
<dbReference type="RefSeq" id="XP_054171895.1">
    <molecule id="P14651-3"/>
    <property type="nucleotide sequence ID" value="XM_054315920.1"/>
</dbReference>
<dbReference type="RefSeq" id="XP_054171898.1">
    <molecule id="P14651-3"/>
    <property type="nucleotide sequence ID" value="XM_054315923.1"/>
</dbReference>
<dbReference type="SMR" id="P14651"/>
<dbReference type="BioGRID" id="109453">
    <property type="interactions" value="32"/>
</dbReference>
<dbReference type="ELM" id="P14651"/>
<dbReference type="FunCoup" id="P14651">
    <property type="interactions" value="1731"/>
</dbReference>
<dbReference type="IntAct" id="P14651">
    <property type="interactions" value="5"/>
</dbReference>
<dbReference type="STRING" id="9606.ENSP00000417207"/>
<dbReference type="GlyConnect" id="1942">
    <property type="glycosylation" value="20 N-Linked glycans (3 sites)"/>
</dbReference>
<dbReference type="GlyCosmos" id="P14651">
    <property type="glycosylation" value="3 sites, 20 glycans"/>
</dbReference>
<dbReference type="GlyGen" id="P14651">
    <property type="glycosylation" value="4 sites, 20 N-linked glycans (3 sites)"/>
</dbReference>
<dbReference type="iPTMnet" id="P14651"/>
<dbReference type="PhosphoSitePlus" id="P14651"/>
<dbReference type="BioMuta" id="HOXB3"/>
<dbReference type="DMDM" id="215274007"/>
<dbReference type="jPOST" id="P14651"/>
<dbReference type="MassIVE" id="P14651"/>
<dbReference type="PaxDb" id="9606-ENSP00000417207"/>
<dbReference type="PeptideAtlas" id="P14651"/>
<dbReference type="ProteomicsDB" id="53070">
    <molecule id="P14651-1"/>
</dbReference>
<dbReference type="ProteomicsDB" id="6705"/>
<dbReference type="ProteomicsDB" id="7060"/>
<dbReference type="Antibodypedia" id="4079">
    <property type="antibodies" value="148 antibodies from 22 providers"/>
</dbReference>
<dbReference type="DNASU" id="3213"/>
<dbReference type="Ensembl" id="ENST00000311626.8">
    <molecule id="P14651-1"/>
    <property type="protein sequence ID" value="ENSP00000308252.4"/>
    <property type="gene ID" value="ENSG00000120093.12"/>
</dbReference>
<dbReference type="Ensembl" id="ENST00000460160.5">
    <molecule id="P14651-3"/>
    <property type="protein sequence ID" value="ENSP00000418035.1"/>
    <property type="gene ID" value="ENSG00000120093.12"/>
</dbReference>
<dbReference type="Ensembl" id="ENST00000470495.1">
    <molecule id="P14651-1"/>
    <property type="protein sequence ID" value="ENSP00000417207.1"/>
    <property type="gene ID" value="ENSG00000120093.12"/>
</dbReference>
<dbReference type="Ensembl" id="ENST00000472863.5">
    <molecule id="P14651-2"/>
    <property type="protein sequence ID" value="ENSP00000419676.1"/>
    <property type="gene ID" value="ENSG00000120093.12"/>
</dbReference>
<dbReference type="Ensembl" id="ENST00000476342.1">
    <molecule id="P14651-1"/>
    <property type="protein sequence ID" value="ENSP00000418892.1"/>
    <property type="gene ID" value="ENSG00000120093.12"/>
</dbReference>
<dbReference type="Ensembl" id="ENST00000489475.5">
    <molecule id="P14651-2"/>
    <property type="protein sequence ID" value="ENSP00000418729.1"/>
    <property type="gene ID" value="ENSG00000120093.12"/>
</dbReference>
<dbReference type="Ensembl" id="ENST00000498678.6">
    <molecule id="P14651-1"/>
    <property type="protein sequence ID" value="ENSP00000420595.1"/>
    <property type="gene ID" value="ENSG00000120093.12"/>
</dbReference>
<dbReference type="GeneID" id="3213"/>
<dbReference type="KEGG" id="hsa:3213"/>
<dbReference type="MANE-Select" id="ENST00000498678.6">
    <property type="protein sequence ID" value="ENSP00000420595.1"/>
    <property type="RefSeq nucleotide sequence ID" value="NM_001384749.1"/>
    <property type="RefSeq protein sequence ID" value="NP_001371678.1"/>
</dbReference>
<dbReference type="UCSC" id="uc002inn.4">
    <molecule id="P14651-1"/>
    <property type="organism name" value="human"/>
</dbReference>
<dbReference type="AGR" id="HGNC:5114"/>
<dbReference type="CTD" id="3213"/>
<dbReference type="DisGeNET" id="3213"/>
<dbReference type="GeneCards" id="HOXB3"/>
<dbReference type="HGNC" id="HGNC:5114">
    <property type="gene designation" value="HOXB3"/>
</dbReference>
<dbReference type="HPA" id="ENSG00000120093">
    <property type="expression patterns" value="Tissue enhanced (epididymis)"/>
</dbReference>
<dbReference type="MIM" id="142966">
    <property type="type" value="gene"/>
</dbReference>
<dbReference type="neXtProt" id="NX_P14651"/>
<dbReference type="OpenTargets" id="ENSG00000120093"/>
<dbReference type="PharmGKB" id="PA29390"/>
<dbReference type="VEuPathDB" id="HostDB:ENSG00000120093"/>
<dbReference type="eggNOG" id="KOG0489">
    <property type="taxonomic scope" value="Eukaryota"/>
</dbReference>
<dbReference type="GeneTree" id="ENSGT00940000159774"/>
<dbReference type="HOGENOM" id="CLU_051508_1_0_1"/>
<dbReference type="InParanoid" id="P14651"/>
<dbReference type="OMA" id="GCAAPQK"/>
<dbReference type="OrthoDB" id="6159439at2759"/>
<dbReference type="PAN-GO" id="P14651">
    <property type="GO annotations" value="6 GO annotations based on evolutionary models"/>
</dbReference>
<dbReference type="PhylomeDB" id="P14651"/>
<dbReference type="TreeFam" id="TF315938"/>
<dbReference type="PathwayCommons" id="P14651"/>
<dbReference type="Reactome" id="R-HSA-5617472">
    <property type="pathway name" value="Activation of anterior HOX genes in hindbrain development during early embryogenesis"/>
</dbReference>
<dbReference type="SignaLink" id="P14651"/>
<dbReference type="SIGNOR" id="P14651"/>
<dbReference type="BioGRID-ORCS" id="3213">
    <property type="hits" value="13 hits in 1185 CRISPR screens"/>
</dbReference>
<dbReference type="ChiTaRS" id="HOXB3">
    <property type="organism name" value="human"/>
</dbReference>
<dbReference type="GeneWiki" id="HOXB3"/>
<dbReference type="GenomeRNAi" id="3213"/>
<dbReference type="Pharos" id="P14651">
    <property type="development level" value="Tbio"/>
</dbReference>
<dbReference type="PRO" id="PR:P14651"/>
<dbReference type="Proteomes" id="UP000005640">
    <property type="component" value="Chromosome 17"/>
</dbReference>
<dbReference type="RNAct" id="P14651">
    <property type="molecule type" value="protein"/>
</dbReference>
<dbReference type="Bgee" id="ENSG00000120093">
    <property type="expression patterns" value="Expressed in right uterine tube and 171 other cell types or tissues"/>
</dbReference>
<dbReference type="ExpressionAtlas" id="P14651">
    <property type="expression patterns" value="baseline and differential"/>
</dbReference>
<dbReference type="GO" id="GO:0000785">
    <property type="term" value="C:chromatin"/>
    <property type="evidence" value="ECO:0000247"/>
    <property type="project" value="NTNU_SB"/>
</dbReference>
<dbReference type="GO" id="GO:0005654">
    <property type="term" value="C:nucleoplasm"/>
    <property type="evidence" value="ECO:0000314"/>
    <property type="project" value="HPA"/>
</dbReference>
<dbReference type="GO" id="GO:0005634">
    <property type="term" value="C:nucleus"/>
    <property type="evidence" value="ECO:0000318"/>
    <property type="project" value="GO_Central"/>
</dbReference>
<dbReference type="GO" id="GO:0001228">
    <property type="term" value="F:DNA-binding transcription activator activity, RNA polymerase II-specific"/>
    <property type="evidence" value="ECO:0000314"/>
    <property type="project" value="NTNU_SB"/>
</dbReference>
<dbReference type="GO" id="GO:0000981">
    <property type="term" value="F:DNA-binding transcription factor activity, RNA polymerase II-specific"/>
    <property type="evidence" value="ECO:0000247"/>
    <property type="project" value="NTNU_SB"/>
</dbReference>
<dbReference type="GO" id="GO:0000978">
    <property type="term" value="F:RNA polymerase II cis-regulatory region sequence-specific DNA binding"/>
    <property type="evidence" value="ECO:0000314"/>
    <property type="project" value="NTNU_SB"/>
</dbReference>
<dbReference type="GO" id="GO:0001525">
    <property type="term" value="P:angiogenesis"/>
    <property type="evidence" value="ECO:0000270"/>
    <property type="project" value="UniProtKB"/>
</dbReference>
<dbReference type="GO" id="GO:0009952">
    <property type="term" value="P:anterior/posterior pattern specification"/>
    <property type="evidence" value="ECO:0000318"/>
    <property type="project" value="GO_Central"/>
</dbReference>
<dbReference type="GO" id="GO:0051216">
    <property type="term" value="P:cartilage development"/>
    <property type="evidence" value="ECO:0007669"/>
    <property type="project" value="Ensembl"/>
</dbReference>
<dbReference type="GO" id="GO:0060216">
    <property type="term" value="P:definitive hemopoiesis"/>
    <property type="evidence" value="ECO:0007669"/>
    <property type="project" value="Ensembl"/>
</dbReference>
<dbReference type="GO" id="GO:0048704">
    <property type="term" value="P:embryonic skeletal system morphogenesis"/>
    <property type="evidence" value="ECO:0000318"/>
    <property type="project" value="GO_Central"/>
</dbReference>
<dbReference type="GO" id="GO:0060324">
    <property type="term" value="P:face development"/>
    <property type="evidence" value="ECO:0007669"/>
    <property type="project" value="Ensembl"/>
</dbReference>
<dbReference type="GO" id="GO:0021615">
    <property type="term" value="P:glossopharyngeal nerve morphogenesis"/>
    <property type="evidence" value="ECO:0007669"/>
    <property type="project" value="Ensembl"/>
</dbReference>
<dbReference type="GO" id="GO:0002244">
    <property type="term" value="P:hematopoietic progenitor cell differentiation"/>
    <property type="evidence" value="ECO:0007669"/>
    <property type="project" value="Ensembl"/>
</dbReference>
<dbReference type="GO" id="GO:0000122">
    <property type="term" value="P:negative regulation of transcription by RNA polymerase II"/>
    <property type="evidence" value="ECO:0007669"/>
    <property type="project" value="Ensembl"/>
</dbReference>
<dbReference type="GO" id="GO:0045944">
    <property type="term" value="P:positive regulation of transcription by RNA polymerase II"/>
    <property type="evidence" value="ECO:0000314"/>
    <property type="project" value="NTNU_SB"/>
</dbReference>
<dbReference type="GO" id="GO:0050767">
    <property type="term" value="P:regulation of neurogenesis"/>
    <property type="evidence" value="ECO:0007669"/>
    <property type="project" value="Ensembl"/>
</dbReference>
<dbReference type="GO" id="GO:0006357">
    <property type="term" value="P:regulation of transcription by RNA polymerase II"/>
    <property type="evidence" value="ECO:0000318"/>
    <property type="project" value="GO_Central"/>
</dbReference>
<dbReference type="GO" id="GO:0021546">
    <property type="term" value="P:rhombomere development"/>
    <property type="evidence" value="ECO:0007669"/>
    <property type="project" value="Ensembl"/>
</dbReference>
<dbReference type="GO" id="GO:0030878">
    <property type="term" value="P:thyroid gland development"/>
    <property type="evidence" value="ECO:0007669"/>
    <property type="project" value="Ensembl"/>
</dbReference>
<dbReference type="CDD" id="cd00086">
    <property type="entry name" value="homeodomain"/>
    <property type="match status" value="1"/>
</dbReference>
<dbReference type="Gene3D" id="1.10.10.60">
    <property type="entry name" value="Homeodomain-like"/>
    <property type="match status" value="1"/>
</dbReference>
<dbReference type="InterPro" id="IPR025281">
    <property type="entry name" value="DUF4074"/>
</dbReference>
<dbReference type="InterPro" id="IPR001356">
    <property type="entry name" value="HD"/>
</dbReference>
<dbReference type="InterPro" id="IPR020479">
    <property type="entry name" value="HD_metazoa"/>
</dbReference>
<dbReference type="InterPro" id="IPR001827">
    <property type="entry name" value="Homeobox_Antennapedia_CS"/>
</dbReference>
<dbReference type="InterPro" id="IPR017970">
    <property type="entry name" value="Homeobox_CS"/>
</dbReference>
<dbReference type="InterPro" id="IPR009057">
    <property type="entry name" value="Homeodomain-like_sf"/>
</dbReference>
<dbReference type="PANTHER" id="PTHR45664:SF11">
    <property type="entry name" value="HOMEOBOX PROTEIN HOX-B3"/>
    <property type="match status" value="1"/>
</dbReference>
<dbReference type="PANTHER" id="PTHR45664">
    <property type="entry name" value="PROTEIN ZERKNUELLT 1-RELATED"/>
    <property type="match status" value="1"/>
</dbReference>
<dbReference type="Pfam" id="PF13293">
    <property type="entry name" value="DUF4074"/>
    <property type="match status" value="1"/>
</dbReference>
<dbReference type="Pfam" id="PF00046">
    <property type="entry name" value="Homeodomain"/>
    <property type="match status" value="1"/>
</dbReference>
<dbReference type="PRINTS" id="PR00024">
    <property type="entry name" value="HOMEOBOX"/>
</dbReference>
<dbReference type="SMART" id="SM00389">
    <property type="entry name" value="HOX"/>
    <property type="match status" value="1"/>
</dbReference>
<dbReference type="SUPFAM" id="SSF46689">
    <property type="entry name" value="Homeodomain-like"/>
    <property type="match status" value="1"/>
</dbReference>
<dbReference type="PROSITE" id="PS00032">
    <property type="entry name" value="ANTENNAPEDIA"/>
    <property type="match status" value="1"/>
</dbReference>
<dbReference type="PROSITE" id="PS00027">
    <property type="entry name" value="HOMEOBOX_1"/>
    <property type="match status" value="1"/>
</dbReference>
<dbReference type="PROSITE" id="PS50071">
    <property type="entry name" value="HOMEOBOX_2"/>
    <property type="match status" value="1"/>
</dbReference>
<feature type="chain" id="PRO_0000200117" description="Homeobox protein Hox-B3">
    <location>
        <begin position="1"/>
        <end position="431"/>
    </location>
</feature>
<feature type="DNA-binding region" description="Homeobox" evidence="1">
    <location>
        <begin position="188"/>
        <end position="247"/>
    </location>
</feature>
<feature type="region of interest" description="Disordered" evidence="2">
    <location>
        <begin position="63"/>
        <end position="125"/>
    </location>
</feature>
<feature type="region of interest" description="Disordered" evidence="2">
    <location>
        <begin position="137"/>
        <end position="192"/>
    </location>
</feature>
<feature type="region of interest" description="Disordered" evidence="2">
    <location>
        <begin position="246"/>
        <end position="273"/>
    </location>
</feature>
<feature type="region of interest" description="Disordered" evidence="2">
    <location>
        <begin position="381"/>
        <end position="431"/>
    </location>
</feature>
<feature type="short sequence motif" description="Antp-type hexapeptide">
    <location>
        <begin position="129"/>
        <end position="134"/>
    </location>
</feature>
<feature type="compositionally biased region" description="Pro residues" evidence="2">
    <location>
        <begin position="83"/>
        <end position="94"/>
    </location>
</feature>
<feature type="compositionally biased region" description="Low complexity" evidence="2">
    <location>
        <begin position="95"/>
        <end position="104"/>
    </location>
</feature>
<feature type="compositionally biased region" description="Low complexity" evidence="2">
    <location>
        <begin position="111"/>
        <end position="120"/>
    </location>
</feature>
<feature type="compositionally biased region" description="Polar residues" evidence="2">
    <location>
        <begin position="139"/>
        <end position="148"/>
    </location>
</feature>
<feature type="compositionally biased region" description="Gly residues" evidence="2">
    <location>
        <begin position="151"/>
        <end position="179"/>
    </location>
</feature>
<feature type="splice variant" id="VSP_056815" description="In isoform 3." evidence="7">
    <location>
        <begin position="1"/>
        <end position="132"/>
    </location>
</feature>
<feature type="splice variant" id="VSP_056434" description="In isoform 2." evidence="7">
    <location>
        <begin position="1"/>
        <end position="73"/>
    </location>
</feature>
<feature type="sequence variant" id="VAR_047729" description="In dbSNP:rs2229304." evidence="3 4 5 6">
    <original>P</original>
    <variation>T</variation>
    <location>
        <position position="82"/>
    </location>
</feature>
<feature type="sequence conflict" description="In Ref. 4; BAH12984." evidence="8" ref="4">
    <original>T</original>
    <variation>A</variation>
    <location>
        <position position="100"/>
    </location>
</feature>
<feature type="sequence conflict" description="In Ref. 2; AAD10852." evidence="8" ref="2">
    <original>QL</original>
    <variation>HV</variation>
    <location>
        <begin position="199"/>
        <end position="200"/>
    </location>
</feature>
<protein>
    <recommendedName>
        <fullName>Homeobox protein Hox-B3</fullName>
    </recommendedName>
    <alternativeName>
        <fullName>Homeobox protein Hox-2.7</fullName>
    </alternativeName>
    <alternativeName>
        <fullName>Homeobox protein Hox-2G</fullName>
    </alternativeName>
</protein>
<organism>
    <name type="scientific">Homo sapiens</name>
    <name type="common">Human</name>
    <dbReference type="NCBI Taxonomy" id="9606"/>
    <lineage>
        <taxon>Eukaryota</taxon>
        <taxon>Metazoa</taxon>
        <taxon>Chordata</taxon>
        <taxon>Craniata</taxon>
        <taxon>Vertebrata</taxon>
        <taxon>Euteleostomi</taxon>
        <taxon>Mammalia</taxon>
        <taxon>Eutheria</taxon>
        <taxon>Euarchontoglires</taxon>
        <taxon>Primates</taxon>
        <taxon>Haplorrhini</taxon>
        <taxon>Catarrhini</taxon>
        <taxon>Hominidae</taxon>
        <taxon>Homo</taxon>
    </lineage>
</organism>
<reference key="1">
    <citation type="journal article" date="1989" name="Nucleic Acids Res.">
        <title>The human HOX gene family.</title>
        <authorList>
            <person name="Acampora D."/>
            <person name="D'Esposito M."/>
            <person name="Faiella A."/>
            <person name="Pannese M."/>
            <person name="Migliaccio E."/>
            <person name="Morelli F."/>
            <person name="Stornaiuolo A."/>
            <person name="Nigro V."/>
            <person name="Simeone A."/>
            <person name="Boncinelli E."/>
        </authorList>
    </citation>
    <scope>NUCLEOTIDE SEQUENCE [MRNA] (ISOFORM 1)</scope>
    <scope>VARIANT THR-82</scope>
</reference>
<reference key="2">
    <citation type="submission" date="1996-05" db="EMBL/GenBank/DDBJ databases">
        <title>Deregulated expression of HoxB3 in hematopoietic cells causes defective development of alpha beta T Lymphocytes and progressive myeloproliferation.</title>
        <authorList>
            <person name="Sauvageau G."/>
            <person name="Thorsteinsdottir U."/>
            <person name="Hough M.R."/>
            <person name="Hugo P."/>
            <person name="Lawrence H.J."/>
            <person name="Largman C."/>
            <person name="Humphries R.K."/>
        </authorList>
    </citation>
    <scope>NUCLEOTIDE SEQUENCE [MRNA] (ISOFORM 1)</scope>
    <scope>VARIANT THR-82</scope>
</reference>
<reference key="3">
    <citation type="journal article" date="2000" name="Am. J. Hum. Genet.">
        <title>Overall linkage disequilibrium in 33 populations for highly informative multisite haplotypes spanning the HOXB gene cluster.</title>
        <authorList>
            <person name="Kidd K.K."/>
            <person name="Busygina V."/>
            <person name="DeMille M.M.C."/>
            <person name="Speed W.C."/>
            <person name="Ruggeri V."/>
            <person name="Kidd J.R."/>
            <person name="Pakstis A.J."/>
        </authorList>
    </citation>
    <scope>NUCLEOTIDE SEQUENCE [GENOMIC DNA]</scope>
    <scope>VARIANT THR-82</scope>
</reference>
<reference key="4">
    <citation type="journal article" date="2004" name="Nat. Genet.">
        <title>Complete sequencing and characterization of 21,243 full-length human cDNAs.</title>
        <authorList>
            <person name="Ota T."/>
            <person name="Suzuki Y."/>
            <person name="Nishikawa T."/>
            <person name="Otsuki T."/>
            <person name="Sugiyama T."/>
            <person name="Irie R."/>
            <person name="Wakamatsu A."/>
            <person name="Hayashi K."/>
            <person name="Sato H."/>
            <person name="Nagai K."/>
            <person name="Kimura K."/>
            <person name="Makita H."/>
            <person name="Sekine M."/>
            <person name="Obayashi M."/>
            <person name="Nishi T."/>
            <person name="Shibahara T."/>
            <person name="Tanaka T."/>
            <person name="Ishii S."/>
            <person name="Yamamoto J."/>
            <person name="Saito K."/>
            <person name="Kawai Y."/>
            <person name="Isono Y."/>
            <person name="Nakamura Y."/>
            <person name="Nagahari K."/>
            <person name="Murakami K."/>
            <person name="Yasuda T."/>
            <person name="Iwayanagi T."/>
            <person name="Wagatsuma M."/>
            <person name="Shiratori A."/>
            <person name="Sudo H."/>
            <person name="Hosoiri T."/>
            <person name="Kaku Y."/>
            <person name="Kodaira H."/>
            <person name="Kondo H."/>
            <person name="Sugawara M."/>
            <person name="Takahashi M."/>
            <person name="Kanda K."/>
            <person name="Yokoi T."/>
            <person name="Furuya T."/>
            <person name="Kikkawa E."/>
            <person name="Omura Y."/>
            <person name="Abe K."/>
            <person name="Kamihara K."/>
            <person name="Katsuta N."/>
            <person name="Sato K."/>
            <person name="Tanikawa M."/>
            <person name="Yamazaki M."/>
            <person name="Ninomiya K."/>
            <person name="Ishibashi T."/>
            <person name="Yamashita H."/>
            <person name="Murakawa K."/>
            <person name="Fujimori K."/>
            <person name="Tanai H."/>
            <person name="Kimata M."/>
            <person name="Watanabe M."/>
            <person name="Hiraoka S."/>
            <person name="Chiba Y."/>
            <person name="Ishida S."/>
            <person name="Ono Y."/>
            <person name="Takiguchi S."/>
            <person name="Watanabe S."/>
            <person name="Yosida M."/>
            <person name="Hotuta T."/>
            <person name="Kusano J."/>
            <person name="Kanehori K."/>
            <person name="Takahashi-Fujii A."/>
            <person name="Hara H."/>
            <person name="Tanase T.-O."/>
            <person name="Nomura Y."/>
            <person name="Togiya S."/>
            <person name="Komai F."/>
            <person name="Hara R."/>
            <person name="Takeuchi K."/>
            <person name="Arita M."/>
            <person name="Imose N."/>
            <person name="Musashino K."/>
            <person name="Yuuki H."/>
            <person name="Oshima A."/>
            <person name="Sasaki N."/>
            <person name="Aotsuka S."/>
            <person name="Yoshikawa Y."/>
            <person name="Matsunawa H."/>
            <person name="Ichihara T."/>
            <person name="Shiohata N."/>
            <person name="Sano S."/>
            <person name="Moriya S."/>
            <person name="Momiyama H."/>
            <person name="Satoh N."/>
            <person name="Takami S."/>
            <person name="Terashima Y."/>
            <person name="Suzuki O."/>
            <person name="Nakagawa S."/>
            <person name="Senoh A."/>
            <person name="Mizoguchi H."/>
            <person name="Goto Y."/>
            <person name="Shimizu F."/>
            <person name="Wakebe H."/>
            <person name="Hishigaki H."/>
            <person name="Watanabe T."/>
            <person name="Sugiyama A."/>
            <person name="Takemoto M."/>
            <person name="Kawakami B."/>
            <person name="Yamazaki M."/>
            <person name="Watanabe K."/>
            <person name="Kumagai A."/>
            <person name="Itakura S."/>
            <person name="Fukuzumi Y."/>
            <person name="Fujimori Y."/>
            <person name="Komiyama M."/>
            <person name="Tashiro H."/>
            <person name="Tanigami A."/>
            <person name="Fujiwara T."/>
            <person name="Ono T."/>
            <person name="Yamada K."/>
            <person name="Fujii Y."/>
            <person name="Ozaki K."/>
            <person name="Hirao M."/>
            <person name="Ohmori Y."/>
            <person name="Kawabata A."/>
            <person name="Hikiji T."/>
            <person name="Kobatake N."/>
            <person name="Inagaki H."/>
            <person name="Ikema Y."/>
            <person name="Okamoto S."/>
            <person name="Okitani R."/>
            <person name="Kawakami T."/>
            <person name="Noguchi S."/>
            <person name="Itoh T."/>
            <person name="Shigeta K."/>
            <person name="Senba T."/>
            <person name="Matsumura K."/>
            <person name="Nakajima Y."/>
            <person name="Mizuno T."/>
            <person name="Morinaga M."/>
            <person name="Sasaki M."/>
            <person name="Togashi T."/>
            <person name="Oyama M."/>
            <person name="Hata H."/>
            <person name="Watanabe M."/>
            <person name="Komatsu T."/>
            <person name="Mizushima-Sugano J."/>
            <person name="Satoh T."/>
            <person name="Shirai Y."/>
            <person name="Takahashi Y."/>
            <person name="Nakagawa K."/>
            <person name="Okumura K."/>
            <person name="Nagase T."/>
            <person name="Nomura N."/>
            <person name="Kikuchi H."/>
            <person name="Masuho Y."/>
            <person name="Yamashita R."/>
            <person name="Nakai K."/>
            <person name="Yada T."/>
            <person name="Nakamura Y."/>
            <person name="Ohara O."/>
            <person name="Isogai T."/>
            <person name="Sugano S."/>
        </authorList>
    </citation>
    <scope>NUCLEOTIDE SEQUENCE [LARGE SCALE MRNA] (ISOFORMS 1; 2 AND 3)</scope>
</reference>
<reference key="5">
    <citation type="journal article" date="2006" name="Nature">
        <title>DNA sequence of human chromosome 17 and analysis of rearrangement in the human lineage.</title>
        <authorList>
            <person name="Zody M.C."/>
            <person name="Garber M."/>
            <person name="Adams D.J."/>
            <person name="Sharpe T."/>
            <person name="Harrow J."/>
            <person name="Lupski J.R."/>
            <person name="Nicholson C."/>
            <person name="Searle S.M."/>
            <person name="Wilming L."/>
            <person name="Young S.K."/>
            <person name="Abouelleil A."/>
            <person name="Allen N.R."/>
            <person name="Bi W."/>
            <person name="Bloom T."/>
            <person name="Borowsky M.L."/>
            <person name="Bugalter B.E."/>
            <person name="Butler J."/>
            <person name="Chang J.L."/>
            <person name="Chen C.-K."/>
            <person name="Cook A."/>
            <person name="Corum B."/>
            <person name="Cuomo C.A."/>
            <person name="de Jong P.J."/>
            <person name="DeCaprio D."/>
            <person name="Dewar K."/>
            <person name="FitzGerald M."/>
            <person name="Gilbert J."/>
            <person name="Gibson R."/>
            <person name="Gnerre S."/>
            <person name="Goldstein S."/>
            <person name="Grafham D.V."/>
            <person name="Grocock R."/>
            <person name="Hafez N."/>
            <person name="Hagopian D.S."/>
            <person name="Hart E."/>
            <person name="Norman C.H."/>
            <person name="Humphray S."/>
            <person name="Jaffe D.B."/>
            <person name="Jones M."/>
            <person name="Kamal M."/>
            <person name="Khodiyar V.K."/>
            <person name="LaButti K."/>
            <person name="Laird G."/>
            <person name="Lehoczky J."/>
            <person name="Liu X."/>
            <person name="Lokyitsang T."/>
            <person name="Loveland J."/>
            <person name="Lui A."/>
            <person name="Macdonald P."/>
            <person name="Major J.E."/>
            <person name="Matthews L."/>
            <person name="Mauceli E."/>
            <person name="McCarroll S.A."/>
            <person name="Mihalev A.H."/>
            <person name="Mudge J."/>
            <person name="Nguyen C."/>
            <person name="Nicol R."/>
            <person name="O'Leary S.B."/>
            <person name="Osoegawa K."/>
            <person name="Schwartz D.C."/>
            <person name="Shaw-Smith C."/>
            <person name="Stankiewicz P."/>
            <person name="Steward C."/>
            <person name="Swarbreck D."/>
            <person name="Venkataraman V."/>
            <person name="Whittaker C.A."/>
            <person name="Yang X."/>
            <person name="Zimmer A.R."/>
            <person name="Bradley A."/>
            <person name="Hubbard T."/>
            <person name="Birren B.W."/>
            <person name="Rogers J."/>
            <person name="Lander E.S."/>
            <person name="Nusbaum C."/>
        </authorList>
    </citation>
    <scope>NUCLEOTIDE SEQUENCE [LARGE SCALE GENOMIC DNA]</scope>
</reference>
<reference key="6">
    <citation type="submission" date="2005-09" db="EMBL/GenBank/DDBJ databases">
        <authorList>
            <person name="Mural R.J."/>
            <person name="Istrail S."/>
            <person name="Sutton G.G."/>
            <person name="Florea L."/>
            <person name="Halpern A.L."/>
            <person name="Mobarry C.M."/>
            <person name="Lippert R."/>
            <person name="Walenz B."/>
            <person name="Shatkay H."/>
            <person name="Dew I."/>
            <person name="Miller J.R."/>
            <person name="Flanigan M.J."/>
            <person name="Edwards N.J."/>
            <person name="Bolanos R."/>
            <person name="Fasulo D."/>
            <person name="Halldorsson B.V."/>
            <person name="Hannenhalli S."/>
            <person name="Turner R."/>
            <person name="Yooseph S."/>
            <person name="Lu F."/>
            <person name="Nusskern D.R."/>
            <person name="Shue B.C."/>
            <person name="Zheng X.H."/>
            <person name="Zhong F."/>
            <person name="Delcher A.L."/>
            <person name="Huson D.H."/>
            <person name="Kravitz S.A."/>
            <person name="Mouchard L."/>
            <person name="Reinert K."/>
            <person name="Remington K.A."/>
            <person name="Clark A.G."/>
            <person name="Waterman M.S."/>
            <person name="Eichler E.E."/>
            <person name="Adams M.D."/>
            <person name="Hunkapiller M.W."/>
            <person name="Myers E.W."/>
            <person name="Venter J.C."/>
        </authorList>
    </citation>
    <scope>NUCLEOTIDE SEQUENCE [LARGE SCALE GENOMIC DNA]</scope>
    <scope>VARIANT THR-82</scope>
</reference>
<reference key="7">
    <citation type="journal article" date="1989" name="Differentiation">
        <title>Differential expression of human HOX-2 genes along the anterior-posterior axis in embryonic central nervous system.</title>
        <authorList>
            <person name="Giampaolo A."/>
            <person name="Acampora D."/>
            <person name="Zappavigna V."/>
            <person name="Pannese M."/>
            <person name="D'Esposito M."/>
            <person name="Care A."/>
            <person name="Faiella A."/>
            <person name="Stornaiuolo A."/>
            <person name="Russo G."/>
            <person name="Simeone A."/>
            <person name="Boncinelli E."/>
            <person name="Peschle C."/>
        </authorList>
    </citation>
    <scope>NUCLEOTIDE SEQUENCE [GENOMIC DNA] OF 188-253</scope>
    <source>
        <tissue>Placenta</tissue>
    </source>
</reference>
<reference key="8">
    <citation type="journal article" date="1989" name="Genome">
        <title>Organization of human class I homeobox genes.</title>
        <authorList>
            <person name="Boncinelli E."/>
            <person name="Acampora D."/>
            <person name="Pannese M."/>
            <person name="D'Esposito M."/>
            <person name="Somma R."/>
            <person name="Gaudino G."/>
            <person name="Stornaiuolo A."/>
            <person name="Cafiero M."/>
            <person name="Faiella A."/>
            <person name="Simeone A."/>
        </authorList>
    </citation>
    <scope>NUCLEOTIDE SEQUENCE [GENOMIC DNA] OF 188-253</scope>
</reference>
<sequence length="431" mass="44340">MQKATYYDNAAAALFGGYSSYPGSNGFGFDVPPQPPFQAATHLEGDYQRSACSLQSLGNAAPHAKSKELNGSCMRPGLAPEPLSAPPGSPPPSAAPTSATSNSSNGGGPSKSGPPKCGPGTNSTLTKQIFPWMKESRQTSKLKNNSPGTAEGCGGGGGGGGGGGSGGSGGGGGGGGGGDKSPPGSAASKRARTAYTSAQLVELEKEFHFNRYLCRPRRVEMANLLNLSERQIKIWFQNRRMKYKKDQKAKGLASSSGGPSPAGSPPQPMQSTAGFMNALHSMTPSYESPSPPAFGKAHQNAYALPSNYQPPLKGCGAPQKYPPTPAPEYEPHVLQANGGAYGTPTMQGSPVYVGGGGYADPLPPPAGPSLYGLNHLSHHPSGNLDYNGAPPMAPSQHHGPCEPHPTYTDLSSHHAPPPQGRIQEAPKLTHL</sequence>
<gene>
    <name type="primary">HOXB3</name>
    <name type="synonym">HOX2G</name>
</gene>
<accession>P14651</accession>
<accession>A8K567</accession>
<accession>B7Z5N8</accession>
<accession>B7Z5P8</accession>
<accession>B7ZAD0</accession>
<accession>D3DTV3</accession>
<accession>O95615</accession>
<accession>P17484</accession>
<evidence type="ECO:0000255" key="1">
    <source>
        <dbReference type="PROSITE-ProRule" id="PRU00108"/>
    </source>
</evidence>
<evidence type="ECO:0000256" key="2">
    <source>
        <dbReference type="SAM" id="MobiDB-lite"/>
    </source>
</evidence>
<evidence type="ECO:0000269" key="3">
    <source>
    </source>
</evidence>
<evidence type="ECO:0000269" key="4">
    <source ref="2"/>
</evidence>
<evidence type="ECO:0000269" key="5">
    <source ref="3"/>
</evidence>
<evidence type="ECO:0000269" key="6">
    <source ref="6"/>
</evidence>
<evidence type="ECO:0000303" key="7">
    <source>
    </source>
</evidence>
<evidence type="ECO:0000305" key="8"/>
<comment type="function">
    <text>Sequence-specific transcription factor which is part of a developmental regulatory system that provides cells with specific positional identities on the anterior-posterior axis.</text>
</comment>
<comment type="subcellular location">
    <subcellularLocation>
        <location>Nucleus</location>
    </subcellularLocation>
</comment>
<comment type="alternative products">
    <event type="alternative splicing"/>
    <isoform>
        <id>P14651-1</id>
        <name>1</name>
        <sequence type="displayed"/>
    </isoform>
    <isoform>
        <id>P14651-2</id>
        <name>2</name>
        <sequence type="described" ref="VSP_056434"/>
    </isoform>
    <isoform>
        <id>P14651-3</id>
        <name>3</name>
        <sequence type="described" ref="VSP_056815"/>
    </isoform>
</comment>
<comment type="developmental stage">
    <text>Expressed in whole embryos and fetuses at 5-9 weeks from conception.</text>
</comment>
<comment type="similarity">
    <text evidence="8">Belongs to the Antp homeobox family.</text>
</comment>